<protein>
    <recommendedName>
        <fullName evidence="1">L-lactate dehydrogenase 1</fullName>
        <shortName evidence="1">L-LDH 1</shortName>
        <ecNumber evidence="1">1.1.1.27</ecNumber>
    </recommendedName>
</protein>
<sequence length="327" mass="35487">MTAAAGNKDHQKVILVGDGAVGSSYAFALVTQNIAQEVGIIDINVPKTEGDALDLSHALAFTSPKKIYAATYDDCHDADLVVLTAGAPQKPGETRLDLVHKNLKINKEIVTTIVDSGFNGIFLVAANPVDILTYSTWKFSGFPKERVIGSGTSLDSARFRQAIAELVDVDARNVHAYILGEHGDTEFPVWSHANVAGLQIYEWVKNNPDVDEEAMVNLFFNVRDAAYTIIEKKGATFYGIAVALARITKAILNDENSVLPLSVYLEGEYGQNDIYIGAPAIINRQGVKQVIEIPLTDAEQEKMEASASALKEVIETAFAKFEAEEAK</sequence>
<keyword id="KW-0021">Allosteric enzyme</keyword>
<keyword id="KW-0963">Cytoplasm</keyword>
<keyword id="KW-0520">NAD</keyword>
<keyword id="KW-0560">Oxidoreductase</keyword>
<keyword id="KW-0597">Phosphoprotein</keyword>
<keyword id="KW-1185">Reference proteome</keyword>
<reference key="1">
    <citation type="journal article" date="2003" name="Science">
        <title>Role of mobile DNA in the evolution of vancomycin-resistant Enterococcus faecalis.</title>
        <authorList>
            <person name="Paulsen I.T."/>
            <person name="Banerjei L."/>
            <person name="Myers G.S.A."/>
            <person name="Nelson K.E."/>
            <person name="Seshadri R."/>
            <person name="Read T.D."/>
            <person name="Fouts D.E."/>
            <person name="Eisen J.A."/>
            <person name="Gill S.R."/>
            <person name="Heidelberg J.F."/>
            <person name="Tettelin H."/>
            <person name="Dodson R.J."/>
            <person name="Umayam L.A."/>
            <person name="Brinkac L.M."/>
            <person name="Beanan M.J."/>
            <person name="Daugherty S.C."/>
            <person name="DeBoy R.T."/>
            <person name="Durkin S.A."/>
            <person name="Kolonay J.F."/>
            <person name="Madupu R."/>
            <person name="Nelson W.C."/>
            <person name="Vamathevan J.J."/>
            <person name="Tran B."/>
            <person name="Upton J."/>
            <person name="Hansen T."/>
            <person name="Shetty J."/>
            <person name="Khouri H.M."/>
            <person name="Utterback T.R."/>
            <person name="Radune D."/>
            <person name="Ketchum K.A."/>
            <person name="Dougherty B.A."/>
            <person name="Fraser C.M."/>
        </authorList>
    </citation>
    <scope>NUCLEOTIDE SEQUENCE [LARGE SCALE GENOMIC DNA]</scope>
    <source>
        <strain>ATCC 700802 / V583</strain>
    </source>
</reference>
<name>LDH1_ENTFA</name>
<organism>
    <name type="scientific">Enterococcus faecalis (strain ATCC 700802 / V583)</name>
    <dbReference type="NCBI Taxonomy" id="226185"/>
    <lineage>
        <taxon>Bacteria</taxon>
        <taxon>Bacillati</taxon>
        <taxon>Bacillota</taxon>
        <taxon>Bacilli</taxon>
        <taxon>Lactobacillales</taxon>
        <taxon>Enterococcaceae</taxon>
        <taxon>Enterococcus</taxon>
    </lineage>
</organism>
<dbReference type="EC" id="1.1.1.27" evidence="1"/>
<dbReference type="EMBL" id="AE016830">
    <property type="protein sequence ID" value="AAO80120.1"/>
    <property type="molecule type" value="Genomic_DNA"/>
</dbReference>
<dbReference type="RefSeq" id="NP_814049.1">
    <property type="nucleotide sequence ID" value="NC_004668.1"/>
</dbReference>
<dbReference type="RefSeq" id="WP_002356251.1">
    <property type="nucleotide sequence ID" value="NZ_KE136524.1"/>
</dbReference>
<dbReference type="SMR" id="Q839C1"/>
<dbReference type="STRING" id="226185.EF_0255"/>
<dbReference type="EnsemblBacteria" id="AAO80120">
    <property type="protein sequence ID" value="AAO80120"/>
    <property type="gene ID" value="EF_0255"/>
</dbReference>
<dbReference type="KEGG" id="efa:EF0255"/>
<dbReference type="PATRIC" id="fig|226185.9.peg.233"/>
<dbReference type="eggNOG" id="COG0039">
    <property type="taxonomic scope" value="Bacteria"/>
</dbReference>
<dbReference type="HOGENOM" id="CLU_045401_1_1_9"/>
<dbReference type="SABIO-RK" id="Q839C1"/>
<dbReference type="UniPathway" id="UPA00554">
    <property type="reaction ID" value="UER00611"/>
</dbReference>
<dbReference type="PHI-base" id="PHI:4139"/>
<dbReference type="Proteomes" id="UP000001415">
    <property type="component" value="Chromosome"/>
</dbReference>
<dbReference type="GO" id="GO:0005737">
    <property type="term" value="C:cytoplasm"/>
    <property type="evidence" value="ECO:0007669"/>
    <property type="project" value="UniProtKB-SubCell"/>
</dbReference>
<dbReference type="GO" id="GO:0004459">
    <property type="term" value="F:L-lactate dehydrogenase activity"/>
    <property type="evidence" value="ECO:0007669"/>
    <property type="project" value="UniProtKB-UniRule"/>
</dbReference>
<dbReference type="GO" id="GO:0006096">
    <property type="term" value="P:glycolytic process"/>
    <property type="evidence" value="ECO:0007669"/>
    <property type="project" value="UniProtKB-UniRule"/>
</dbReference>
<dbReference type="GO" id="GO:0006089">
    <property type="term" value="P:lactate metabolic process"/>
    <property type="evidence" value="ECO:0007669"/>
    <property type="project" value="TreeGrafter"/>
</dbReference>
<dbReference type="CDD" id="cd05291">
    <property type="entry name" value="HicDH_like"/>
    <property type="match status" value="1"/>
</dbReference>
<dbReference type="FunFam" id="3.40.50.720:FF:000018">
    <property type="entry name" value="Malate dehydrogenase"/>
    <property type="match status" value="1"/>
</dbReference>
<dbReference type="Gene3D" id="3.90.110.10">
    <property type="entry name" value="Lactate dehydrogenase/glycoside hydrolase, family 4, C-terminal"/>
    <property type="match status" value="1"/>
</dbReference>
<dbReference type="Gene3D" id="3.40.50.720">
    <property type="entry name" value="NAD(P)-binding Rossmann-like Domain"/>
    <property type="match status" value="1"/>
</dbReference>
<dbReference type="HAMAP" id="MF_00488">
    <property type="entry name" value="Lactate_dehydrog"/>
    <property type="match status" value="1"/>
</dbReference>
<dbReference type="InterPro" id="IPR001557">
    <property type="entry name" value="L-lactate/malate_DH"/>
</dbReference>
<dbReference type="InterPro" id="IPR011304">
    <property type="entry name" value="L-lactate_DH"/>
</dbReference>
<dbReference type="InterPro" id="IPR018177">
    <property type="entry name" value="L-lactate_DH_AS"/>
</dbReference>
<dbReference type="InterPro" id="IPR022383">
    <property type="entry name" value="Lactate/malate_DH_C"/>
</dbReference>
<dbReference type="InterPro" id="IPR001236">
    <property type="entry name" value="Lactate/malate_DH_N"/>
</dbReference>
<dbReference type="InterPro" id="IPR015955">
    <property type="entry name" value="Lactate_DH/Glyco_Ohase_4_C"/>
</dbReference>
<dbReference type="InterPro" id="IPR036291">
    <property type="entry name" value="NAD(P)-bd_dom_sf"/>
</dbReference>
<dbReference type="NCBIfam" id="TIGR01771">
    <property type="entry name" value="L-LDH-NAD"/>
    <property type="match status" value="1"/>
</dbReference>
<dbReference type="NCBIfam" id="NF000824">
    <property type="entry name" value="PRK00066.1"/>
    <property type="match status" value="1"/>
</dbReference>
<dbReference type="NCBIfam" id="NF004863">
    <property type="entry name" value="PRK06223.1"/>
    <property type="match status" value="1"/>
</dbReference>
<dbReference type="PANTHER" id="PTHR43128">
    <property type="entry name" value="L-2-HYDROXYCARBOXYLATE DEHYDROGENASE (NAD(P)(+))"/>
    <property type="match status" value="1"/>
</dbReference>
<dbReference type="PANTHER" id="PTHR43128:SF16">
    <property type="entry name" value="L-LACTATE DEHYDROGENASE"/>
    <property type="match status" value="1"/>
</dbReference>
<dbReference type="Pfam" id="PF02866">
    <property type="entry name" value="Ldh_1_C"/>
    <property type="match status" value="1"/>
</dbReference>
<dbReference type="Pfam" id="PF00056">
    <property type="entry name" value="Ldh_1_N"/>
    <property type="match status" value="1"/>
</dbReference>
<dbReference type="PIRSF" id="PIRSF000102">
    <property type="entry name" value="Lac_mal_DH"/>
    <property type="match status" value="1"/>
</dbReference>
<dbReference type="PRINTS" id="PR00086">
    <property type="entry name" value="LLDHDRGNASE"/>
</dbReference>
<dbReference type="SUPFAM" id="SSF56327">
    <property type="entry name" value="LDH C-terminal domain-like"/>
    <property type="match status" value="1"/>
</dbReference>
<dbReference type="SUPFAM" id="SSF51735">
    <property type="entry name" value="NAD(P)-binding Rossmann-fold domains"/>
    <property type="match status" value="1"/>
</dbReference>
<dbReference type="PROSITE" id="PS00064">
    <property type="entry name" value="L_LDH"/>
    <property type="match status" value="1"/>
</dbReference>
<evidence type="ECO:0000255" key="1">
    <source>
        <dbReference type="HAMAP-Rule" id="MF_00488"/>
    </source>
</evidence>
<accession>Q839C1</accession>
<proteinExistence type="inferred from homology"/>
<comment type="function">
    <text evidence="1">Catalyzes the conversion of lactate to pyruvate.</text>
</comment>
<comment type="catalytic activity">
    <reaction evidence="1">
        <text>(S)-lactate + NAD(+) = pyruvate + NADH + H(+)</text>
        <dbReference type="Rhea" id="RHEA:23444"/>
        <dbReference type="ChEBI" id="CHEBI:15361"/>
        <dbReference type="ChEBI" id="CHEBI:15378"/>
        <dbReference type="ChEBI" id="CHEBI:16651"/>
        <dbReference type="ChEBI" id="CHEBI:57540"/>
        <dbReference type="ChEBI" id="CHEBI:57945"/>
        <dbReference type="EC" id="1.1.1.27"/>
    </reaction>
</comment>
<comment type="activity regulation">
    <text evidence="1">Allosterically activated by fructose 1,6-bisphosphate (FBP).</text>
</comment>
<comment type="pathway">
    <text evidence="1">Fermentation; pyruvate fermentation to lactate; (S)-lactate from pyruvate: step 1/1.</text>
</comment>
<comment type="subunit">
    <text evidence="1">Homotetramer.</text>
</comment>
<comment type="subcellular location">
    <subcellularLocation>
        <location evidence="1">Cytoplasm</location>
    </subcellularLocation>
</comment>
<comment type="similarity">
    <text evidence="1">Belongs to the LDH/MDH superfamily. LDH family.</text>
</comment>
<gene>
    <name evidence="1" type="primary">ldh1</name>
    <name type="synonym">ldh-1</name>
    <name type="ordered locus">EF_0255</name>
</gene>
<feature type="chain" id="PRO_0000168343" description="L-lactate dehydrogenase 1">
    <location>
        <begin position="1"/>
        <end position="327"/>
    </location>
</feature>
<feature type="active site" description="Proton acceptor" evidence="1">
    <location>
        <position position="182"/>
    </location>
</feature>
<feature type="binding site" evidence="1">
    <location>
        <position position="21"/>
    </location>
    <ligand>
        <name>NAD(+)</name>
        <dbReference type="ChEBI" id="CHEBI:57540"/>
    </ligand>
</feature>
<feature type="binding site" evidence="1">
    <location>
        <position position="42"/>
    </location>
    <ligand>
        <name>NAD(+)</name>
        <dbReference type="ChEBI" id="CHEBI:57540"/>
    </ligand>
</feature>
<feature type="binding site" evidence="1">
    <location>
        <position position="47"/>
    </location>
    <ligand>
        <name>NAD(+)</name>
        <dbReference type="ChEBI" id="CHEBI:57540"/>
    </ligand>
</feature>
<feature type="binding site" evidence="1">
    <location>
        <position position="72"/>
    </location>
    <ligand>
        <name>NAD(+)</name>
        <dbReference type="ChEBI" id="CHEBI:57540"/>
    </ligand>
</feature>
<feature type="binding site" evidence="1">
    <location>
        <begin position="86"/>
        <end position="87"/>
    </location>
    <ligand>
        <name>NAD(+)</name>
        <dbReference type="ChEBI" id="CHEBI:57540"/>
    </ligand>
</feature>
<feature type="binding site" evidence="1">
    <location>
        <position position="89"/>
    </location>
    <ligand>
        <name>substrate</name>
    </ligand>
</feature>
<feature type="binding site" evidence="1">
    <location>
        <position position="95"/>
    </location>
    <ligand>
        <name>substrate</name>
    </ligand>
</feature>
<feature type="binding site" evidence="1">
    <location>
        <begin position="125"/>
        <end position="127"/>
    </location>
    <ligand>
        <name>NAD(+)</name>
        <dbReference type="ChEBI" id="CHEBI:57540"/>
    </ligand>
</feature>
<feature type="binding site" evidence="1">
    <location>
        <begin position="127"/>
        <end position="130"/>
    </location>
    <ligand>
        <name>substrate</name>
    </ligand>
</feature>
<feature type="binding site" evidence="1">
    <location>
        <position position="150"/>
    </location>
    <ligand>
        <name>NAD(+)</name>
        <dbReference type="ChEBI" id="CHEBI:57540"/>
    </ligand>
</feature>
<feature type="binding site" evidence="1">
    <location>
        <begin position="155"/>
        <end position="158"/>
    </location>
    <ligand>
        <name>substrate</name>
    </ligand>
</feature>
<feature type="binding site" evidence="1">
    <location>
        <position position="160"/>
    </location>
    <ligand>
        <name>beta-D-fructose 1,6-bisphosphate</name>
        <dbReference type="ChEBI" id="CHEBI:32966"/>
        <note>allosteric activator</note>
    </ligand>
</feature>
<feature type="binding site" evidence="1">
    <location>
        <position position="175"/>
    </location>
    <ligand>
        <name>beta-D-fructose 1,6-bisphosphate</name>
        <dbReference type="ChEBI" id="CHEBI:32966"/>
        <note>allosteric activator</note>
    </ligand>
</feature>
<feature type="binding site" evidence="1">
    <location>
        <position position="236"/>
    </location>
    <ligand>
        <name>substrate</name>
    </ligand>
</feature>
<feature type="modified residue" description="Phosphotyrosine" evidence="1">
    <location>
        <position position="227"/>
    </location>
</feature>